<organism>
    <name type="scientific">Salmonella newport (strain SL254)</name>
    <dbReference type="NCBI Taxonomy" id="423368"/>
    <lineage>
        <taxon>Bacteria</taxon>
        <taxon>Pseudomonadati</taxon>
        <taxon>Pseudomonadota</taxon>
        <taxon>Gammaproteobacteria</taxon>
        <taxon>Enterobacterales</taxon>
        <taxon>Enterobacteriaceae</taxon>
        <taxon>Salmonella</taxon>
    </lineage>
</organism>
<keyword id="KW-0067">ATP-binding</keyword>
<keyword id="KW-0119">Carbohydrate metabolism</keyword>
<keyword id="KW-0963">Cytoplasm</keyword>
<keyword id="KW-0299">Galactose metabolism</keyword>
<keyword id="KW-0418">Kinase</keyword>
<keyword id="KW-0460">Magnesium</keyword>
<keyword id="KW-0479">Metal-binding</keyword>
<keyword id="KW-0547">Nucleotide-binding</keyword>
<keyword id="KW-0808">Transferase</keyword>
<accession>B4SZH7</accession>
<sequence>MNLKEKTRALFAEIFGYPATHTIQAPGRVNLIGEHTDYNDGFVLPCAIDYQTVISCAPRDDRTVRVIAADYDNQVDEFSLDAPIVTHDSQQWSNYVRGVVKHLQQRNNAFGGVDMVISGNVPQGAGLSSSASLEVAVGTVFQQLYHLPLDGAQIALNGQEAENQFVGCNCGIMDQLISALGKKDHALLIDCRTLGAKAVSMPKGVAVVIINSNFKRTLVGSEYNTRREQCETGARFFQQPALRDVSLEAFNAVASELDPVVAKRVRHVLSENARTVEAASALEKGDLQRMGQLMAESHASMRDDFEITVPQIDTLVDIVKATIGDRGGVRMTGGGFGGCVVALIPEDLVPAVRQAVAQQYEAKTGIKETFYVCKPSQGAGQC</sequence>
<dbReference type="EC" id="2.7.1.6" evidence="1"/>
<dbReference type="EMBL" id="CP001113">
    <property type="protein sequence ID" value="ACF65624.1"/>
    <property type="molecule type" value="Genomic_DNA"/>
</dbReference>
<dbReference type="RefSeq" id="WP_001049367.1">
    <property type="nucleotide sequence ID" value="NZ_CCMR01000003.1"/>
</dbReference>
<dbReference type="SMR" id="B4SZH7"/>
<dbReference type="KEGG" id="see:SNSL254_A0838"/>
<dbReference type="HOGENOM" id="CLU_017814_2_1_6"/>
<dbReference type="UniPathway" id="UPA00214"/>
<dbReference type="Proteomes" id="UP000008824">
    <property type="component" value="Chromosome"/>
</dbReference>
<dbReference type="GO" id="GO:0005829">
    <property type="term" value="C:cytosol"/>
    <property type="evidence" value="ECO:0007669"/>
    <property type="project" value="TreeGrafter"/>
</dbReference>
<dbReference type="GO" id="GO:0005524">
    <property type="term" value="F:ATP binding"/>
    <property type="evidence" value="ECO:0007669"/>
    <property type="project" value="UniProtKB-UniRule"/>
</dbReference>
<dbReference type="GO" id="GO:0004335">
    <property type="term" value="F:galactokinase activity"/>
    <property type="evidence" value="ECO:0007669"/>
    <property type="project" value="UniProtKB-UniRule"/>
</dbReference>
<dbReference type="GO" id="GO:0000287">
    <property type="term" value="F:magnesium ion binding"/>
    <property type="evidence" value="ECO:0007669"/>
    <property type="project" value="UniProtKB-UniRule"/>
</dbReference>
<dbReference type="GO" id="GO:0006012">
    <property type="term" value="P:galactose metabolic process"/>
    <property type="evidence" value="ECO:0007669"/>
    <property type="project" value="UniProtKB-UniRule"/>
</dbReference>
<dbReference type="FunFam" id="3.30.230.10:FF:000017">
    <property type="entry name" value="Galactokinase"/>
    <property type="match status" value="1"/>
</dbReference>
<dbReference type="FunFam" id="3.30.70.890:FF:000001">
    <property type="entry name" value="Galactokinase"/>
    <property type="match status" value="1"/>
</dbReference>
<dbReference type="Gene3D" id="3.30.230.10">
    <property type="match status" value="1"/>
</dbReference>
<dbReference type="Gene3D" id="3.30.70.890">
    <property type="entry name" value="GHMP kinase, C-terminal domain"/>
    <property type="match status" value="1"/>
</dbReference>
<dbReference type="HAMAP" id="MF_00246">
    <property type="entry name" value="Galactokinase"/>
    <property type="match status" value="1"/>
</dbReference>
<dbReference type="InterPro" id="IPR000705">
    <property type="entry name" value="Galactokinase"/>
</dbReference>
<dbReference type="InterPro" id="IPR022963">
    <property type="entry name" value="Galactokinase_bac"/>
</dbReference>
<dbReference type="InterPro" id="IPR019741">
    <property type="entry name" value="Galactokinase_CS"/>
</dbReference>
<dbReference type="InterPro" id="IPR019539">
    <property type="entry name" value="GalKase_N"/>
</dbReference>
<dbReference type="InterPro" id="IPR013750">
    <property type="entry name" value="GHMP_kinase_C_dom"/>
</dbReference>
<dbReference type="InterPro" id="IPR036554">
    <property type="entry name" value="GHMP_kinase_C_sf"/>
</dbReference>
<dbReference type="InterPro" id="IPR006204">
    <property type="entry name" value="GHMP_kinase_N_dom"/>
</dbReference>
<dbReference type="InterPro" id="IPR006203">
    <property type="entry name" value="GHMP_knse_ATP-bd_CS"/>
</dbReference>
<dbReference type="InterPro" id="IPR006206">
    <property type="entry name" value="Mevalonate/galactokinase"/>
</dbReference>
<dbReference type="InterPro" id="IPR020568">
    <property type="entry name" value="Ribosomal_Su5_D2-typ_SF"/>
</dbReference>
<dbReference type="InterPro" id="IPR014721">
    <property type="entry name" value="Ribsml_uS5_D2-typ_fold_subgr"/>
</dbReference>
<dbReference type="NCBIfam" id="TIGR00131">
    <property type="entry name" value="gal_kin"/>
    <property type="match status" value="1"/>
</dbReference>
<dbReference type="NCBIfam" id="NF003472">
    <property type="entry name" value="PRK05101.1"/>
    <property type="match status" value="1"/>
</dbReference>
<dbReference type="PANTHER" id="PTHR10457:SF7">
    <property type="entry name" value="GALACTOKINASE-RELATED"/>
    <property type="match status" value="1"/>
</dbReference>
<dbReference type="PANTHER" id="PTHR10457">
    <property type="entry name" value="MEVALONATE KINASE/GALACTOKINASE"/>
    <property type="match status" value="1"/>
</dbReference>
<dbReference type="Pfam" id="PF10509">
    <property type="entry name" value="GalKase_gal_bdg"/>
    <property type="match status" value="1"/>
</dbReference>
<dbReference type="Pfam" id="PF08544">
    <property type="entry name" value="GHMP_kinases_C"/>
    <property type="match status" value="1"/>
</dbReference>
<dbReference type="Pfam" id="PF00288">
    <property type="entry name" value="GHMP_kinases_N"/>
    <property type="match status" value="1"/>
</dbReference>
<dbReference type="PIRSF" id="PIRSF000530">
    <property type="entry name" value="Galactokinase"/>
    <property type="match status" value="1"/>
</dbReference>
<dbReference type="PRINTS" id="PR00473">
    <property type="entry name" value="GALCTOKINASE"/>
</dbReference>
<dbReference type="PRINTS" id="PR00959">
    <property type="entry name" value="MEVGALKINASE"/>
</dbReference>
<dbReference type="SUPFAM" id="SSF55060">
    <property type="entry name" value="GHMP Kinase, C-terminal domain"/>
    <property type="match status" value="1"/>
</dbReference>
<dbReference type="SUPFAM" id="SSF54211">
    <property type="entry name" value="Ribosomal protein S5 domain 2-like"/>
    <property type="match status" value="1"/>
</dbReference>
<dbReference type="PROSITE" id="PS00106">
    <property type="entry name" value="GALACTOKINASE"/>
    <property type="match status" value="1"/>
</dbReference>
<dbReference type="PROSITE" id="PS00627">
    <property type="entry name" value="GHMP_KINASES_ATP"/>
    <property type="match status" value="1"/>
</dbReference>
<reference key="1">
    <citation type="journal article" date="2011" name="J. Bacteriol.">
        <title>Comparative genomics of 28 Salmonella enterica isolates: evidence for CRISPR-mediated adaptive sublineage evolution.</title>
        <authorList>
            <person name="Fricke W.F."/>
            <person name="Mammel M.K."/>
            <person name="McDermott P.F."/>
            <person name="Tartera C."/>
            <person name="White D.G."/>
            <person name="Leclerc J.E."/>
            <person name="Ravel J."/>
            <person name="Cebula T.A."/>
        </authorList>
    </citation>
    <scope>NUCLEOTIDE SEQUENCE [LARGE SCALE GENOMIC DNA]</scope>
    <source>
        <strain>SL254</strain>
    </source>
</reference>
<proteinExistence type="inferred from homology"/>
<protein>
    <recommendedName>
        <fullName evidence="1">Galactokinase</fullName>
        <ecNumber evidence="1">2.7.1.6</ecNumber>
    </recommendedName>
    <alternativeName>
        <fullName evidence="1">Galactose kinase</fullName>
    </alternativeName>
</protein>
<name>GAL1_SALNS</name>
<evidence type="ECO:0000255" key="1">
    <source>
        <dbReference type="HAMAP-Rule" id="MF_00246"/>
    </source>
</evidence>
<feature type="chain" id="PRO_1000100843" description="Galactokinase">
    <location>
        <begin position="1"/>
        <end position="382"/>
    </location>
</feature>
<feature type="active site" description="Proton acceptor" evidence="1">
    <location>
        <position position="174"/>
    </location>
</feature>
<feature type="binding site" evidence="1">
    <location>
        <begin position="34"/>
        <end position="37"/>
    </location>
    <ligand>
        <name>substrate</name>
    </ligand>
</feature>
<feature type="binding site" evidence="1">
    <location>
        <begin position="124"/>
        <end position="130"/>
    </location>
    <ligand>
        <name>ATP</name>
        <dbReference type="ChEBI" id="CHEBI:30616"/>
    </ligand>
</feature>
<feature type="binding site" evidence="1">
    <location>
        <position position="130"/>
    </location>
    <ligand>
        <name>Mg(2+)</name>
        <dbReference type="ChEBI" id="CHEBI:18420"/>
    </ligand>
</feature>
<feature type="binding site" evidence="1">
    <location>
        <position position="162"/>
    </location>
    <ligand>
        <name>Mg(2+)</name>
        <dbReference type="ChEBI" id="CHEBI:18420"/>
    </ligand>
</feature>
<feature type="binding site" evidence="1">
    <location>
        <position position="223"/>
    </location>
    <ligand>
        <name>substrate</name>
    </ligand>
</feature>
<feature type="site" description="Transition state stabilizer" evidence="1">
    <location>
        <position position="28"/>
    </location>
</feature>
<gene>
    <name evidence="1" type="primary">galK</name>
    <name type="ordered locus">SNSL254_A0838</name>
</gene>
<comment type="function">
    <text evidence="1">Catalyzes the transfer of the gamma-phosphate of ATP to D-galactose to form alpha-D-galactose-1-phosphate (Gal-1-P).</text>
</comment>
<comment type="catalytic activity">
    <reaction evidence="1">
        <text>alpha-D-galactose + ATP = alpha-D-galactose 1-phosphate + ADP + H(+)</text>
        <dbReference type="Rhea" id="RHEA:13553"/>
        <dbReference type="ChEBI" id="CHEBI:15378"/>
        <dbReference type="ChEBI" id="CHEBI:28061"/>
        <dbReference type="ChEBI" id="CHEBI:30616"/>
        <dbReference type="ChEBI" id="CHEBI:58336"/>
        <dbReference type="ChEBI" id="CHEBI:456216"/>
        <dbReference type="EC" id="2.7.1.6"/>
    </reaction>
</comment>
<comment type="pathway">
    <text evidence="1">Carbohydrate metabolism; galactose metabolism.</text>
</comment>
<comment type="subcellular location">
    <subcellularLocation>
        <location evidence="1">Cytoplasm</location>
    </subcellularLocation>
</comment>
<comment type="similarity">
    <text evidence="1">Belongs to the GHMP kinase family. GalK subfamily.</text>
</comment>